<reference key="1">
    <citation type="journal article" date="1995" name="Proc. Natl. Acad. Sci. U.S.A.">
        <title>Cloning, expression, and characterization of cDNAs encoding Arabidopsis thaliana squalene synthase.</title>
        <authorList>
            <person name="Nakashima T."/>
            <person name="Inoue T."/>
            <person name="Oka A."/>
            <person name="Nishino T."/>
            <person name="Osumi T."/>
            <person name="Hata S."/>
        </authorList>
    </citation>
    <scope>NUCLEOTIDE SEQUENCE [MRNA]</scope>
    <scope>COFACTOR</scope>
    <scope>CATALYTIC ACTIVITY</scope>
    <scope>PATHWAY</scope>
    <source>
        <strain>cv. Columbia</strain>
    </source>
</reference>
<reference key="2">
    <citation type="journal article" date="1997" name="Eur. J. Biochem.">
        <title>Cloning and characterization of the Arabidopsis thaliana SQS1 gene encoding squalene synthase -- involvement of the C-terminal region of the enzyme in the channeling of squalene through the sterol pathway.</title>
        <authorList>
            <person name="Kribii R."/>
            <person name="Arro M."/>
            <person name="Del Arco A."/>
            <person name="Gonzalez V."/>
            <person name="Balcells L."/>
            <person name="Delourme D."/>
            <person name="Ferrer A."/>
            <person name="Karst F."/>
            <person name="Boronat A."/>
        </authorList>
    </citation>
    <scope>NUCLEOTIDE SEQUENCE [MRNA]</scope>
    <scope>TISSUE SPECIFICITY</scope>
    <source>
        <strain>cv. Landsberg erecta</strain>
    </source>
</reference>
<reference key="3">
    <citation type="submission" date="1997-07" db="EMBL/GenBank/DDBJ databases">
        <authorList>
            <person name="Kribii R."/>
            <person name="Arro M."/>
            <person name="del Arco A."/>
            <person name="Gonzalez V."/>
            <person name="Balcells L.L."/>
            <person name="Delourme D."/>
            <person name="Ferrer A."/>
            <person name="Karst F."/>
            <person name="Boronat A."/>
        </authorList>
    </citation>
    <scope>NUCLEOTIDE SEQUENCE [GENOMIC DNA]</scope>
</reference>
<reference key="4">
    <citation type="submission" date="1996-11" db="EMBL/GenBank/DDBJ databases">
        <title>Isolation and characterization of squalene synthase from Arabidopsis thaliana.</title>
        <authorList>
            <person name="Connolly E.L."/>
            <person name="Learned R.M."/>
        </authorList>
    </citation>
    <scope>NUCLEOTIDE SEQUENCE [MRNA]</scope>
</reference>
<reference key="5">
    <citation type="journal article" date="1999" name="Nature">
        <title>Sequence and analysis of chromosome 4 of the plant Arabidopsis thaliana.</title>
        <authorList>
            <person name="Mayer K.F.X."/>
            <person name="Schueller C."/>
            <person name="Wambutt R."/>
            <person name="Murphy G."/>
            <person name="Volckaert G."/>
            <person name="Pohl T."/>
            <person name="Duesterhoeft A."/>
            <person name="Stiekema W."/>
            <person name="Entian K.-D."/>
            <person name="Terryn N."/>
            <person name="Harris B."/>
            <person name="Ansorge W."/>
            <person name="Brandt P."/>
            <person name="Grivell L.A."/>
            <person name="Rieger M."/>
            <person name="Weichselgartner M."/>
            <person name="de Simone V."/>
            <person name="Obermaier B."/>
            <person name="Mache R."/>
            <person name="Mueller M."/>
            <person name="Kreis M."/>
            <person name="Delseny M."/>
            <person name="Puigdomenech P."/>
            <person name="Watson M."/>
            <person name="Schmidtheini T."/>
            <person name="Reichert B."/>
            <person name="Portetelle D."/>
            <person name="Perez-Alonso M."/>
            <person name="Boutry M."/>
            <person name="Bancroft I."/>
            <person name="Vos P."/>
            <person name="Hoheisel J."/>
            <person name="Zimmermann W."/>
            <person name="Wedler H."/>
            <person name="Ridley P."/>
            <person name="Langham S.-A."/>
            <person name="McCullagh B."/>
            <person name="Bilham L."/>
            <person name="Robben J."/>
            <person name="van der Schueren J."/>
            <person name="Grymonprez B."/>
            <person name="Chuang Y.-J."/>
            <person name="Vandenbussche F."/>
            <person name="Braeken M."/>
            <person name="Weltjens I."/>
            <person name="Voet M."/>
            <person name="Bastiaens I."/>
            <person name="Aert R."/>
            <person name="Defoor E."/>
            <person name="Weitzenegger T."/>
            <person name="Bothe G."/>
            <person name="Ramsperger U."/>
            <person name="Hilbert H."/>
            <person name="Braun M."/>
            <person name="Holzer E."/>
            <person name="Brandt A."/>
            <person name="Peters S."/>
            <person name="van Staveren M."/>
            <person name="Dirkse W."/>
            <person name="Mooijman P."/>
            <person name="Klein Lankhorst R."/>
            <person name="Rose M."/>
            <person name="Hauf J."/>
            <person name="Koetter P."/>
            <person name="Berneiser S."/>
            <person name="Hempel S."/>
            <person name="Feldpausch M."/>
            <person name="Lamberth S."/>
            <person name="Van den Daele H."/>
            <person name="De Keyser A."/>
            <person name="Buysshaert C."/>
            <person name="Gielen J."/>
            <person name="Villarroel R."/>
            <person name="De Clercq R."/>
            <person name="van Montagu M."/>
            <person name="Rogers J."/>
            <person name="Cronin A."/>
            <person name="Quail M.A."/>
            <person name="Bray-Allen S."/>
            <person name="Clark L."/>
            <person name="Doggett J."/>
            <person name="Hall S."/>
            <person name="Kay M."/>
            <person name="Lennard N."/>
            <person name="McLay K."/>
            <person name="Mayes R."/>
            <person name="Pettett A."/>
            <person name="Rajandream M.A."/>
            <person name="Lyne M."/>
            <person name="Benes V."/>
            <person name="Rechmann S."/>
            <person name="Borkova D."/>
            <person name="Bloecker H."/>
            <person name="Scharfe M."/>
            <person name="Grimm M."/>
            <person name="Loehnert T.-H."/>
            <person name="Dose S."/>
            <person name="de Haan M."/>
            <person name="Maarse A.C."/>
            <person name="Schaefer M."/>
            <person name="Mueller-Auer S."/>
            <person name="Gabel C."/>
            <person name="Fuchs M."/>
            <person name="Fartmann B."/>
            <person name="Granderath K."/>
            <person name="Dauner D."/>
            <person name="Herzl A."/>
            <person name="Neumann S."/>
            <person name="Argiriou A."/>
            <person name="Vitale D."/>
            <person name="Liguori R."/>
            <person name="Piravandi E."/>
            <person name="Massenet O."/>
            <person name="Quigley F."/>
            <person name="Clabauld G."/>
            <person name="Muendlein A."/>
            <person name="Felber R."/>
            <person name="Schnabl S."/>
            <person name="Hiller R."/>
            <person name="Schmidt W."/>
            <person name="Lecharny A."/>
            <person name="Aubourg S."/>
            <person name="Chefdor F."/>
            <person name="Cooke R."/>
            <person name="Berger C."/>
            <person name="Monfort A."/>
            <person name="Casacuberta E."/>
            <person name="Gibbons T."/>
            <person name="Weber N."/>
            <person name="Vandenbol M."/>
            <person name="Bargues M."/>
            <person name="Terol J."/>
            <person name="Torres A."/>
            <person name="Perez-Perez A."/>
            <person name="Purnelle B."/>
            <person name="Bent E."/>
            <person name="Johnson S."/>
            <person name="Tacon D."/>
            <person name="Jesse T."/>
            <person name="Heijnen L."/>
            <person name="Schwarz S."/>
            <person name="Scholler P."/>
            <person name="Heber S."/>
            <person name="Francs P."/>
            <person name="Bielke C."/>
            <person name="Frishman D."/>
            <person name="Haase D."/>
            <person name="Lemcke K."/>
            <person name="Mewes H.-W."/>
            <person name="Stocker S."/>
            <person name="Zaccaria P."/>
            <person name="Bevan M."/>
            <person name="Wilson R.K."/>
            <person name="de la Bastide M."/>
            <person name="Habermann K."/>
            <person name="Parnell L."/>
            <person name="Dedhia N."/>
            <person name="Gnoj L."/>
            <person name="Schutz K."/>
            <person name="Huang E."/>
            <person name="Spiegel L."/>
            <person name="Sekhon M."/>
            <person name="Murray J."/>
            <person name="Sheet P."/>
            <person name="Cordes M."/>
            <person name="Abu-Threideh J."/>
            <person name="Stoneking T."/>
            <person name="Kalicki J."/>
            <person name="Graves T."/>
            <person name="Harmon G."/>
            <person name="Edwards J."/>
            <person name="Latreille P."/>
            <person name="Courtney L."/>
            <person name="Cloud J."/>
            <person name="Abbott A."/>
            <person name="Scott K."/>
            <person name="Johnson D."/>
            <person name="Minx P."/>
            <person name="Bentley D."/>
            <person name="Fulton B."/>
            <person name="Miller N."/>
            <person name="Greco T."/>
            <person name="Kemp K."/>
            <person name="Kramer J."/>
            <person name="Fulton L."/>
            <person name="Mardis E."/>
            <person name="Dante M."/>
            <person name="Pepin K."/>
            <person name="Hillier L.W."/>
            <person name="Nelson J."/>
            <person name="Spieth J."/>
            <person name="Ryan E."/>
            <person name="Andrews S."/>
            <person name="Geisel C."/>
            <person name="Layman D."/>
            <person name="Du H."/>
            <person name="Ali J."/>
            <person name="Berghoff A."/>
            <person name="Jones K."/>
            <person name="Drone K."/>
            <person name="Cotton M."/>
            <person name="Joshu C."/>
            <person name="Antonoiu B."/>
            <person name="Zidanic M."/>
            <person name="Strong C."/>
            <person name="Sun H."/>
            <person name="Lamar B."/>
            <person name="Yordan C."/>
            <person name="Ma P."/>
            <person name="Zhong J."/>
            <person name="Preston R."/>
            <person name="Vil D."/>
            <person name="Shekher M."/>
            <person name="Matero A."/>
            <person name="Shah R."/>
            <person name="Swaby I.K."/>
            <person name="O'Shaughnessy A."/>
            <person name="Rodriguez M."/>
            <person name="Hoffman J."/>
            <person name="Till S."/>
            <person name="Granat S."/>
            <person name="Shohdy N."/>
            <person name="Hasegawa A."/>
            <person name="Hameed A."/>
            <person name="Lodhi M."/>
            <person name="Johnson A."/>
            <person name="Chen E."/>
            <person name="Marra M.A."/>
            <person name="Martienssen R."/>
            <person name="McCombie W.R."/>
        </authorList>
    </citation>
    <scope>NUCLEOTIDE SEQUENCE [LARGE SCALE GENOMIC DNA]</scope>
    <source>
        <strain>cv. Columbia</strain>
    </source>
</reference>
<reference key="6">
    <citation type="journal article" date="2017" name="Plant J.">
        <title>Araport11: a complete reannotation of the Arabidopsis thaliana reference genome.</title>
        <authorList>
            <person name="Cheng C.Y."/>
            <person name="Krishnakumar V."/>
            <person name="Chan A.P."/>
            <person name="Thibaud-Nissen F."/>
            <person name="Schobel S."/>
            <person name="Town C.D."/>
        </authorList>
    </citation>
    <scope>GENOME REANNOTATION</scope>
    <source>
        <strain>cv. Columbia</strain>
    </source>
</reference>
<reference key="7">
    <citation type="journal article" date="2003" name="Science">
        <title>Empirical analysis of transcriptional activity in the Arabidopsis genome.</title>
        <authorList>
            <person name="Yamada K."/>
            <person name="Lim J."/>
            <person name="Dale J.M."/>
            <person name="Chen H."/>
            <person name="Shinn P."/>
            <person name="Palm C.J."/>
            <person name="Southwick A.M."/>
            <person name="Wu H.C."/>
            <person name="Kim C.J."/>
            <person name="Nguyen M."/>
            <person name="Pham P.K."/>
            <person name="Cheuk R.F."/>
            <person name="Karlin-Newmann G."/>
            <person name="Liu S.X."/>
            <person name="Lam B."/>
            <person name="Sakano H."/>
            <person name="Wu T."/>
            <person name="Yu G."/>
            <person name="Miranda M."/>
            <person name="Quach H.L."/>
            <person name="Tripp M."/>
            <person name="Chang C.H."/>
            <person name="Lee J.M."/>
            <person name="Toriumi M.J."/>
            <person name="Chan M.M."/>
            <person name="Tang C.C."/>
            <person name="Onodera C.S."/>
            <person name="Deng J.M."/>
            <person name="Akiyama K."/>
            <person name="Ansari Y."/>
            <person name="Arakawa T."/>
            <person name="Banh J."/>
            <person name="Banno F."/>
            <person name="Bowser L."/>
            <person name="Brooks S.Y."/>
            <person name="Carninci P."/>
            <person name="Chao Q."/>
            <person name="Choy N."/>
            <person name="Enju A."/>
            <person name="Goldsmith A.D."/>
            <person name="Gurjal M."/>
            <person name="Hansen N.F."/>
            <person name="Hayashizaki Y."/>
            <person name="Johnson-Hopson C."/>
            <person name="Hsuan V.W."/>
            <person name="Iida K."/>
            <person name="Karnes M."/>
            <person name="Khan S."/>
            <person name="Koesema E."/>
            <person name="Ishida J."/>
            <person name="Jiang P.X."/>
            <person name="Jones T."/>
            <person name="Kawai J."/>
            <person name="Kamiya A."/>
            <person name="Meyers C."/>
            <person name="Nakajima M."/>
            <person name="Narusaka M."/>
            <person name="Seki M."/>
            <person name="Sakurai T."/>
            <person name="Satou M."/>
            <person name="Tamse R."/>
            <person name="Vaysberg M."/>
            <person name="Wallender E.K."/>
            <person name="Wong C."/>
            <person name="Yamamura Y."/>
            <person name="Yuan S."/>
            <person name="Shinozaki K."/>
            <person name="Davis R.W."/>
            <person name="Theologis A."/>
            <person name="Ecker J.R."/>
        </authorList>
    </citation>
    <scope>NUCLEOTIDE SEQUENCE [LARGE SCALE MRNA]</scope>
    <source>
        <strain>cv. Columbia</strain>
    </source>
</reference>
<reference key="8">
    <citation type="journal article" date="2008" name="Plant Mol. Biol.">
        <title>Arabidopsis thaliana contains a single gene encoding squalene synthase.</title>
        <authorList>
            <person name="Busquets A."/>
            <person name="Keim V."/>
            <person name="Closa M."/>
            <person name="del Arco A."/>
            <person name="Boronat A."/>
            <person name="Arro M."/>
            <person name="Ferrer A."/>
        </authorList>
    </citation>
    <scope>MUTAGENESIS OF PHE-287</scope>
    <scope>SUBCELLULAR LOCATION</scope>
    <scope>TISSUE SPECIFICITY</scope>
    <scope>DEVELOPMENTAL STAGE</scope>
    <scope>COFACTOR</scope>
    <scope>CATALYTIC ACTIVITY</scope>
</reference>
<reference key="9">
    <citation type="journal article" date="2012" name="Mol. Cell. Proteomics">
        <title>Comparative large-scale characterisation of plant vs. mammal proteins reveals similar and idiosyncratic N-alpha acetylation features.</title>
        <authorList>
            <person name="Bienvenut W.V."/>
            <person name="Sumpton D."/>
            <person name="Martinez A."/>
            <person name="Lilla S."/>
            <person name="Espagne C."/>
            <person name="Meinnel T."/>
            <person name="Giglione C."/>
        </authorList>
    </citation>
    <scope>ACETYLATION [LARGE SCALE ANALYSIS] AT GLY-2</scope>
    <scope>CLEAVAGE OF INITIATOR METHIONINE [LARGE SCALE ANALYSIS]</scope>
    <scope>IDENTIFICATION BY MASS SPECTROMETRY [LARGE SCALE ANALYSIS]</scope>
</reference>
<feature type="initiator methionine" description="Removed" evidence="7">
    <location>
        <position position="1"/>
    </location>
</feature>
<feature type="chain" id="PRO_0000067455" description="Squalene synthase 1">
    <location>
        <begin position="2"/>
        <end position="410"/>
    </location>
</feature>
<feature type="transmembrane region" description="Helical" evidence="1">
    <location>
        <begin position="283"/>
        <end position="303"/>
    </location>
</feature>
<feature type="transmembrane region" description="Helical" evidence="1">
    <location>
        <begin position="387"/>
        <end position="407"/>
    </location>
</feature>
<feature type="modified residue" description="N-acetylglycine" evidence="7">
    <location>
        <position position="2"/>
    </location>
</feature>
<feature type="mutagenesis site" description="Drastic reduction of squalene synthase activity." evidence="2">
    <original>F</original>
    <variation>S</variation>
    <location>
        <position position="287"/>
    </location>
</feature>
<gene>
    <name evidence="5" type="primary">SQS1</name>
    <name type="ordered locus">At4g34640</name>
    <name type="ORF">T4L20.220</name>
</gene>
<protein>
    <recommendedName>
        <fullName evidence="5">Squalene synthase 1</fullName>
        <shortName evidence="5">SQS 1</shortName>
        <shortName evidence="5">SS 1</shortName>
        <ecNumber evidence="2 3">2.5.1.21</ecNumber>
    </recommendedName>
    <alternativeName>
        <fullName evidence="6">FPP:FPP farnesyltransferase 1</fullName>
    </alternativeName>
    <alternativeName>
        <fullName evidence="6">Farnesyl-diphosphate farnesyltransferase 1</fullName>
    </alternativeName>
</protein>
<keyword id="KW-0007">Acetylation</keyword>
<keyword id="KW-0256">Endoplasmic reticulum</keyword>
<keyword id="KW-0414">Isoprene biosynthesis</keyword>
<keyword id="KW-0460">Magnesium</keyword>
<keyword id="KW-0472">Membrane</keyword>
<keyword id="KW-0511">Multifunctional enzyme</keyword>
<keyword id="KW-0521">NADP</keyword>
<keyword id="KW-1185">Reference proteome</keyword>
<keyword id="KW-0808">Transferase</keyword>
<keyword id="KW-0812">Transmembrane</keyword>
<keyword id="KW-1133">Transmembrane helix</keyword>
<dbReference type="EC" id="2.5.1.21" evidence="2 3"/>
<dbReference type="EMBL" id="D29017">
    <property type="protein sequence ID" value="BAA06103.1"/>
    <property type="molecule type" value="mRNA"/>
</dbReference>
<dbReference type="EMBL" id="X86692">
    <property type="protein sequence ID" value="CAA60385.1"/>
    <property type="molecule type" value="mRNA"/>
</dbReference>
<dbReference type="EMBL" id="AF004560">
    <property type="protein sequence ID" value="AAB62242.1"/>
    <property type="molecule type" value="Genomic_DNA"/>
</dbReference>
<dbReference type="EMBL" id="U79159">
    <property type="protein sequence ID" value="AAD00296.1"/>
    <property type="molecule type" value="mRNA"/>
</dbReference>
<dbReference type="EMBL" id="AL023094">
    <property type="protein sequence ID" value="CAA18843.1"/>
    <property type="molecule type" value="Genomic_DNA"/>
</dbReference>
<dbReference type="EMBL" id="AL161585">
    <property type="protein sequence ID" value="CAB80181.1"/>
    <property type="molecule type" value="Genomic_DNA"/>
</dbReference>
<dbReference type="EMBL" id="CP002687">
    <property type="protein sequence ID" value="AEE86403.1"/>
    <property type="molecule type" value="Genomic_DNA"/>
</dbReference>
<dbReference type="EMBL" id="AY099868">
    <property type="protein sequence ID" value="AAM20719.1"/>
    <property type="molecule type" value="mRNA"/>
</dbReference>
<dbReference type="EMBL" id="BT003419">
    <property type="protein sequence ID" value="AAO30082.1"/>
    <property type="molecule type" value="mRNA"/>
</dbReference>
<dbReference type="PIR" id="S54251">
    <property type="entry name" value="S54251"/>
</dbReference>
<dbReference type="RefSeq" id="NP_195190.1">
    <property type="nucleotide sequence ID" value="NM_119630.4"/>
</dbReference>
<dbReference type="SMR" id="P53799"/>
<dbReference type="BioGRID" id="14898">
    <property type="interactions" value="9"/>
</dbReference>
<dbReference type="FunCoup" id="P53799">
    <property type="interactions" value="3281"/>
</dbReference>
<dbReference type="IntAct" id="P53799">
    <property type="interactions" value="9"/>
</dbReference>
<dbReference type="STRING" id="3702.P53799"/>
<dbReference type="iPTMnet" id="P53799"/>
<dbReference type="PaxDb" id="3702-AT4G34640.1"/>
<dbReference type="ProteomicsDB" id="232076"/>
<dbReference type="EnsemblPlants" id="AT4G34640.1">
    <property type="protein sequence ID" value="AT4G34640.1"/>
    <property type="gene ID" value="AT4G34640"/>
</dbReference>
<dbReference type="GeneID" id="829616"/>
<dbReference type="Gramene" id="AT4G34640.1">
    <property type="protein sequence ID" value="AT4G34640.1"/>
    <property type="gene ID" value="AT4G34640"/>
</dbReference>
<dbReference type="KEGG" id="ath:AT4G34640"/>
<dbReference type="Araport" id="AT4G34640"/>
<dbReference type="TAIR" id="AT4G34640">
    <property type="gene designation" value="SQS1"/>
</dbReference>
<dbReference type="eggNOG" id="KOG1459">
    <property type="taxonomic scope" value="Eukaryota"/>
</dbReference>
<dbReference type="HOGENOM" id="CLU_031981_0_0_1"/>
<dbReference type="InParanoid" id="P53799"/>
<dbReference type="OMA" id="GEACQLM"/>
<dbReference type="OrthoDB" id="431150at2759"/>
<dbReference type="PhylomeDB" id="P53799"/>
<dbReference type="BioCyc" id="ARA:AT4G34640-MONOMER"/>
<dbReference type="BioCyc" id="MetaCyc:AT4G34640-MONOMER"/>
<dbReference type="BRENDA" id="2.5.1.21">
    <property type="organism ID" value="399"/>
</dbReference>
<dbReference type="UniPathway" id="UPA00767">
    <property type="reaction ID" value="UER00751"/>
</dbReference>
<dbReference type="PRO" id="PR:P53799"/>
<dbReference type="Proteomes" id="UP000006548">
    <property type="component" value="Chromosome 4"/>
</dbReference>
<dbReference type="ExpressionAtlas" id="P53799">
    <property type="expression patterns" value="baseline and differential"/>
</dbReference>
<dbReference type="GO" id="GO:0005783">
    <property type="term" value="C:endoplasmic reticulum"/>
    <property type="evidence" value="ECO:0000314"/>
    <property type="project" value="TAIR"/>
</dbReference>
<dbReference type="GO" id="GO:0005789">
    <property type="term" value="C:endoplasmic reticulum membrane"/>
    <property type="evidence" value="ECO:0000314"/>
    <property type="project" value="UniProtKB"/>
</dbReference>
<dbReference type="GO" id="GO:0005886">
    <property type="term" value="C:plasma membrane"/>
    <property type="evidence" value="ECO:0007005"/>
    <property type="project" value="TAIR"/>
</dbReference>
<dbReference type="GO" id="GO:0051996">
    <property type="term" value="F:squalene synthase [NAD(P)H] activity"/>
    <property type="evidence" value="ECO:0000314"/>
    <property type="project" value="UniProtKB"/>
</dbReference>
<dbReference type="GO" id="GO:0045338">
    <property type="term" value="P:farnesyl diphosphate metabolic process"/>
    <property type="evidence" value="ECO:0007669"/>
    <property type="project" value="InterPro"/>
</dbReference>
<dbReference type="GO" id="GO:0008299">
    <property type="term" value="P:isoprenoid biosynthetic process"/>
    <property type="evidence" value="ECO:0007669"/>
    <property type="project" value="UniProtKB-KW"/>
</dbReference>
<dbReference type="GO" id="GO:0016126">
    <property type="term" value="P:sterol biosynthetic process"/>
    <property type="evidence" value="ECO:0000304"/>
    <property type="project" value="TAIR"/>
</dbReference>
<dbReference type="CDD" id="cd00683">
    <property type="entry name" value="Trans_IPPS_HH"/>
    <property type="match status" value="1"/>
</dbReference>
<dbReference type="FunFam" id="1.10.600.10:FF:000012">
    <property type="entry name" value="Squalene synthase 1"/>
    <property type="match status" value="1"/>
</dbReference>
<dbReference type="Gene3D" id="1.10.600.10">
    <property type="entry name" value="Farnesyl Diphosphate Synthase"/>
    <property type="match status" value="1"/>
</dbReference>
<dbReference type="InterPro" id="IPR008949">
    <property type="entry name" value="Isoprenoid_synthase_dom_sf"/>
</dbReference>
<dbReference type="InterPro" id="IPR002060">
    <property type="entry name" value="Squ/phyt_synthse"/>
</dbReference>
<dbReference type="InterPro" id="IPR006449">
    <property type="entry name" value="Squal_synth-like"/>
</dbReference>
<dbReference type="InterPro" id="IPR019845">
    <property type="entry name" value="Squalene/phytoene_synthase_CS"/>
</dbReference>
<dbReference type="InterPro" id="IPR044844">
    <property type="entry name" value="Trans_IPPS_euk-type"/>
</dbReference>
<dbReference type="InterPro" id="IPR033904">
    <property type="entry name" value="Trans_IPPS_HH"/>
</dbReference>
<dbReference type="NCBIfam" id="TIGR01559">
    <property type="entry name" value="squal_synth"/>
    <property type="match status" value="1"/>
</dbReference>
<dbReference type="PANTHER" id="PTHR11626">
    <property type="entry name" value="FARNESYL-DIPHOSPHATE FARNESYLTRANSFERASE"/>
    <property type="match status" value="1"/>
</dbReference>
<dbReference type="PANTHER" id="PTHR11626:SF2">
    <property type="entry name" value="SQUALENE SYNTHASE"/>
    <property type="match status" value="1"/>
</dbReference>
<dbReference type="Pfam" id="PF00494">
    <property type="entry name" value="SQS_PSY"/>
    <property type="match status" value="1"/>
</dbReference>
<dbReference type="SFLD" id="SFLDS00005">
    <property type="entry name" value="Isoprenoid_Synthase_Type_I"/>
    <property type="match status" value="1"/>
</dbReference>
<dbReference type="SFLD" id="SFLDG01018">
    <property type="entry name" value="Squalene/Phytoene_Synthase_Lik"/>
    <property type="match status" value="1"/>
</dbReference>
<dbReference type="SUPFAM" id="SSF48576">
    <property type="entry name" value="Terpenoid synthases"/>
    <property type="match status" value="1"/>
</dbReference>
<dbReference type="PROSITE" id="PS01044">
    <property type="entry name" value="SQUALEN_PHYTOEN_SYN_1"/>
    <property type="match status" value="1"/>
</dbReference>
<dbReference type="PROSITE" id="PS01045">
    <property type="entry name" value="SQUALEN_PHYTOEN_SYN_2"/>
    <property type="match status" value="1"/>
</dbReference>
<sequence length="410" mass="47142">MGSLGTMLRYPDDIYPLLKMKRAIEKAEKQIPPEPHWGFCYSMLHKVSRSFSLVIQQLNTELRNAVCVFYLVLRALDTVEDDTSIPTDEKVPILIAFHRHIYDTDWHYSCGTKEYKILMDQFHHVSAAFLELEKGYQEAIEEITRRMGAGMAKFICQEVETVDDYDEYCHYVAGLVGLGLSKLFLAAGSEVLTPDWEAISNSMGLFLQKTNIIRDYLEDINEIPKSRMFWPREIWGKYADKLEDLKYEENTNKSVQCLNEMVTNALMHIEDCLKYMVSLRDPSIFRFCAIPQIMAIGTLALCYNNEQVFRGVVKLRRGLTAKVIDRTKTMADVYGAFYDFSCMLKTKVDKNDPNASKTLNRLEAVQKLCRDAGVLQNRKSYVNDKGQPNSVFIIMVVILLAIVFAYLRAN</sequence>
<evidence type="ECO:0000255" key="1"/>
<evidence type="ECO:0000269" key="2">
    <source>
    </source>
</evidence>
<evidence type="ECO:0000269" key="3">
    <source>
    </source>
</evidence>
<evidence type="ECO:0000269" key="4">
    <source>
    </source>
</evidence>
<evidence type="ECO:0000303" key="5">
    <source>
    </source>
</evidence>
<evidence type="ECO:0000305" key="6"/>
<evidence type="ECO:0007744" key="7">
    <source>
    </source>
</evidence>
<name>FDFT1_ARATH</name>
<accession>P53799</accession>
<comment type="catalytic activity">
    <reaction evidence="2 3">
        <text>2 (2E,6E)-farnesyl diphosphate + NADPH + H(+) = squalene + 2 diphosphate + NADP(+)</text>
        <dbReference type="Rhea" id="RHEA:32295"/>
        <dbReference type="ChEBI" id="CHEBI:15378"/>
        <dbReference type="ChEBI" id="CHEBI:15440"/>
        <dbReference type="ChEBI" id="CHEBI:33019"/>
        <dbReference type="ChEBI" id="CHEBI:57783"/>
        <dbReference type="ChEBI" id="CHEBI:58349"/>
        <dbReference type="ChEBI" id="CHEBI:175763"/>
        <dbReference type="EC" id="2.5.1.21"/>
    </reaction>
</comment>
<comment type="catalytic activity">
    <reaction evidence="2 3">
        <text>2 (2E,6E)-farnesyl diphosphate + NADH + H(+) = squalene + 2 diphosphate + NAD(+)</text>
        <dbReference type="Rhea" id="RHEA:32299"/>
        <dbReference type="ChEBI" id="CHEBI:15378"/>
        <dbReference type="ChEBI" id="CHEBI:15440"/>
        <dbReference type="ChEBI" id="CHEBI:33019"/>
        <dbReference type="ChEBI" id="CHEBI:57540"/>
        <dbReference type="ChEBI" id="CHEBI:57945"/>
        <dbReference type="ChEBI" id="CHEBI:175763"/>
        <dbReference type="EC" id="2.5.1.21"/>
    </reaction>
</comment>
<comment type="cofactor">
    <cofactor evidence="2 3">
        <name>Mg(2+)</name>
        <dbReference type="ChEBI" id="CHEBI:18420"/>
    </cofactor>
    <cofactor evidence="2">
        <name>Mn(2+)</name>
        <dbReference type="ChEBI" id="CHEBI:29035"/>
    </cofactor>
</comment>
<comment type="pathway">
    <text evidence="3">Terpene metabolism; lanosterol biosynthesis; lanosterol from farnesyl diphosphate: step 1/3.</text>
</comment>
<comment type="subcellular location">
    <subcellularLocation>
        <location evidence="2">Endoplasmic reticulum membrane</location>
        <topology evidence="1">Multi-pass membrane protein</topology>
    </subcellularLocation>
</comment>
<comment type="tissue specificity">
    <text evidence="2 4">Expressed in all tissues analyzed (seedlings, cotyledons, inflorescences, siliques, leaves, stems and roots). Highly expressed in roots and pollen.</text>
</comment>
<comment type="developmental stage">
    <text evidence="2">First observed in very early stages of seedling development. Particularly expressed in the vascular tissues and the petioles.</text>
</comment>
<comment type="similarity">
    <text evidence="6">Belongs to the phytoene/squalene synthase family.</text>
</comment>
<proteinExistence type="evidence at protein level"/>
<organism>
    <name type="scientific">Arabidopsis thaliana</name>
    <name type="common">Mouse-ear cress</name>
    <dbReference type="NCBI Taxonomy" id="3702"/>
    <lineage>
        <taxon>Eukaryota</taxon>
        <taxon>Viridiplantae</taxon>
        <taxon>Streptophyta</taxon>
        <taxon>Embryophyta</taxon>
        <taxon>Tracheophyta</taxon>
        <taxon>Spermatophyta</taxon>
        <taxon>Magnoliopsida</taxon>
        <taxon>eudicotyledons</taxon>
        <taxon>Gunneridae</taxon>
        <taxon>Pentapetalae</taxon>
        <taxon>rosids</taxon>
        <taxon>malvids</taxon>
        <taxon>Brassicales</taxon>
        <taxon>Brassicaceae</taxon>
        <taxon>Camelineae</taxon>
        <taxon>Arabidopsis</taxon>
    </lineage>
</organism>